<comment type="function">
    <text evidence="5 6">Required for peroxisomal protein import which maintains the function of peroxisomes.</text>
</comment>
<comment type="subunit">
    <text evidence="4">Interacts with SLN1.</text>
</comment>
<comment type="subcellular location">
    <subcellularLocation>
        <location evidence="6">Cytoplasm</location>
    </subcellularLocation>
</comment>
<comment type="miscellaneous">
    <text evidence="3">Present with 8970 molecules/cell in log phase SD medium.</text>
</comment>
<comment type="similarity">
    <text evidence="7">Belongs to the DnaJ family.</text>
</comment>
<accession>P40564</accession>
<accession>D6VVT4</accession>
<accession>Q6Q5N6</accession>
<feature type="chain" id="PRO_0000071141" description="DnaJ-like protein 1">
    <location>
        <begin position="1"/>
        <end position="432"/>
    </location>
</feature>
<feature type="domain" description="J" evidence="1">
    <location>
        <begin position="4"/>
        <end position="73"/>
    </location>
</feature>
<feature type="region of interest" description="Disordered" evidence="2">
    <location>
        <begin position="117"/>
        <end position="187"/>
    </location>
</feature>
<feature type="sequence conflict" description="In Ref. 4; AAS56212." evidence="7" ref="4">
    <original>E</original>
    <variation>G</variation>
    <location>
        <position position="325"/>
    </location>
</feature>
<keyword id="KW-0143">Chaperone</keyword>
<keyword id="KW-0963">Cytoplasm</keyword>
<keyword id="KW-1185">Reference proteome</keyword>
<sequence length="432" mass="48575">MVVDTEYYDLLGVSTTASSIEIKKAYRKKSIQEHPDKNPNDPTATERFQAISEAYQVLGDDDLRAKYDKYGRKEAIPQGGFEDAAEQFSVIFGGDAFASYIGELMLLKNLQKTEELNAEDEAEKEKENVETMEESPADGKTNGTTNAVDAALGNTNEKDDKNKARTTSGNLTVHDGNKKNEQVGAEAKKKKTKLEQFEEEQEVEKQKRVDQLSKTLIERLSILTESVYDDACKDSFKKKFEEEANLLKMESFGLDILHTIGDVYYEKAEIFLASQNLFGMGGIFHSMKAKGGVFMDTLRTVSAAIDAQNTMKELEKMKEASTNNEPLFDKDGNEQIKPTTEELAQQEQLLMGKVLSAAWHGSKYEITSTLRGVCKKVLEDDSVSKKTLIRRAEAMKLLGEVFKKTFRTKVEQEEAQIFEELVAEATKKKRHT</sequence>
<gene>
    <name type="primary">DJP1</name>
    <name type="synonym">ICS1</name>
    <name type="synonym">PAS22</name>
    <name type="ordered locus">YIR004W</name>
    <name type="ORF">YIB4W</name>
</gene>
<dbReference type="EMBL" id="X79743">
    <property type="status" value="NOT_ANNOTATED_CDS"/>
    <property type="molecule type" value="Genomic_DNA"/>
</dbReference>
<dbReference type="EMBL" id="Z38062">
    <property type="protein sequence ID" value="CAA86206.1"/>
    <property type="molecule type" value="Genomic_DNA"/>
</dbReference>
<dbReference type="EMBL" id="AY557886">
    <property type="protein sequence ID" value="AAS56212.1"/>
    <property type="molecule type" value="Genomic_DNA"/>
</dbReference>
<dbReference type="EMBL" id="BK006942">
    <property type="protein sequence ID" value="DAA08550.1"/>
    <property type="molecule type" value="Genomic_DNA"/>
</dbReference>
<dbReference type="PIR" id="S48438">
    <property type="entry name" value="S48438"/>
</dbReference>
<dbReference type="RefSeq" id="NP_012269.1">
    <property type="nucleotide sequence ID" value="NM_001179526.1"/>
</dbReference>
<dbReference type="SMR" id="P40564"/>
<dbReference type="BioGRID" id="34995">
    <property type="interactions" value="69"/>
</dbReference>
<dbReference type="DIP" id="DIP-5923N"/>
<dbReference type="FunCoup" id="P40564">
    <property type="interactions" value="72"/>
</dbReference>
<dbReference type="IntAct" id="P40564">
    <property type="interactions" value="2"/>
</dbReference>
<dbReference type="STRING" id="4932.YIR004W"/>
<dbReference type="TCDB" id="3.A.30.1.1">
    <property type="family name" value="the endoplasmic reticulum surface retrieval pathway (er-surf) family"/>
</dbReference>
<dbReference type="iPTMnet" id="P40564"/>
<dbReference type="PaxDb" id="4932-YIR004W"/>
<dbReference type="PeptideAtlas" id="P40564"/>
<dbReference type="EnsemblFungi" id="YIR004W_mRNA">
    <property type="protein sequence ID" value="YIR004W"/>
    <property type="gene ID" value="YIR004W"/>
</dbReference>
<dbReference type="GeneID" id="854820"/>
<dbReference type="KEGG" id="sce:YIR004W"/>
<dbReference type="AGR" id="SGD:S000001443"/>
<dbReference type="SGD" id="S000001443">
    <property type="gene designation" value="DJP1"/>
</dbReference>
<dbReference type="VEuPathDB" id="FungiDB:YIR004W"/>
<dbReference type="eggNOG" id="KOG0691">
    <property type="taxonomic scope" value="Eukaryota"/>
</dbReference>
<dbReference type="GeneTree" id="ENSGT00940000176532"/>
<dbReference type="HOGENOM" id="CLU_025145_3_1_1"/>
<dbReference type="InParanoid" id="P40564"/>
<dbReference type="OMA" id="RPALMDK"/>
<dbReference type="OrthoDB" id="552049at2759"/>
<dbReference type="BioCyc" id="YEAST:G3O-31425-MONOMER"/>
<dbReference type="BioGRID-ORCS" id="854820">
    <property type="hits" value="0 hits in 10 CRISPR screens"/>
</dbReference>
<dbReference type="PRO" id="PR:P40564"/>
<dbReference type="Proteomes" id="UP000002311">
    <property type="component" value="Chromosome IX"/>
</dbReference>
<dbReference type="RNAct" id="P40564">
    <property type="molecule type" value="protein"/>
</dbReference>
<dbReference type="GO" id="GO:0071944">
    <property type="term" value="C:cell periphery"/>
    <property type="evidence" value="ECO:0007005"/>
    <property type="project" value="SGD"/>
</dbReference>
<dbReference type="GO" id="GO:0005933">
    <property type="term" value="C:cellular bud"/>
    <property type="evidence" value="ECO:0007005"/>
    <property type="project" value="SGD"/>
</dbReference>
<dbReference type="GO" id="GO:0005829">
    <property type="term" value="C:cytosol"/>
    <property type="evidence" value="ECO:0000314"/>
    <property type="project" value="SGD"/>
</dbReference>
<dbReference type="GO" id="GO:0005783">
    <property type="term" value="C:endoplasmic reticulum"/>
    <property type="evidence" value="ECO:0007005"/>
    <property type="project" value="SGD"/>
</dbReference>
<dbReference type="GO" id="GO:0005739">
    <property type="term" value="C:mitochondrion"/>
    <property type="evidence" value="ECO:0007669"/>
    <property type="project" value="GOC"/>
</dbReference>
<dbReference type="GO" id="GO:0051087">
    <property type="term" value="F:protein-folding chaperone binding"/>
    <property type="evidence" value="ECO:0000250"/>
    <property type="project" value="SGD"/>
</dbReference>
<dbReference type="GO" id="GO:0016558">
    <property type="term" value="P:protein import into peroxisome matrix"/>
    <property type="evidence" value="ECO:0000315"/>
    <property type="project" value="SGD"/>
</dbReference>
<dbReference type="GO" id="GO:0045040">
    <property type="term" value="P:protein insertion into mitochondrial outer membrane"/>
    <property type="evidence" value="ECO:0000315"/>
    <property type="project" value="SGD"/>
</dbReference>
<dbReference type="GO" id="GO:0006626">
    <property type="term" value="P:protein targeting to mitochondrion"/>
    <property type="evidence" value="ECO:0000315"/>
    <property type="project" value="SGD"/>
</dbReference>
<dbReference type="CDD" id="cd06257">
    <property type="entry name" value="DnaJ"/>
    <property type="match status" value="1"/>
</dbReference>
<dbReference type="FunFam" id="1.10.287.110:FF:000028">
    <property type="entry name" value="DnaJ domain protein"/>
    <property type="match status" value="1"/>
</dbReference>
<dbReference type="Gene3D" id="1.10.287.110">
    <property type="entry name" value="DnaJ domain"/>
    <property type="match status" value="1"/>
</dbReference>
<dbReference type="InterPro" id="IPR001623">
    <property type="entry name" value="DnaJ_domain"/>
</dbReference>
<dbReference type="InterPro" id="IPR018253">
    <property type="entry name" value="DnaJ_domain_CS"/>
</dbReference>
<dbReference type="InterPro" id="IPR026894">
    <property type="entry name" value="DnaJ_X"/>
</dbReference>
<dbReference type="InterPro" id="IPR036869">
    <property type="entry name" value="J_dom_sf"/>
</dbReference>
<dbReference type="InterPro" id="IPR052814">
    <property type="entry name" value="Peroxisomal_DnaJ"/>
</dbReference>
<dbReference type="PANTHER" id="PTHR45006">
    <property type="entry name" value="DNAJ-LIKE PROTEIN 1"/>
    <property type="match status" value="1"/>
</dbReference>
<dbReference type="PANTHER" id="PTHR45006:SF1">
    <property type="entry name" value="DNAJ-LIKE PROTEIN 1"/>
    <property type="match status" value="1"/>
</dbReference>
<dbReference type="Pfam" id="PF00226">
    <property type="entry name" value="DnaJ"/>
    <property type="match status" value="1"/>
</dbReference>
<dbReference type="Pfam" id="PF14308">
    <property type="entry name" value="DnaJ-X"/>
    <property type="match status" value="1"/>
</dbReference>
<dbReference type="PRINTS" id="PR00625">
    <property type="entry name" value="JDOMAIN"/>
</dbReference>
<dbReference type="SMART" id="SM00271">
    <property type="entry name" value="DnaJ"/>
    <property type="match status" value="1"/>
</dbReference>
<dbReference type="SUPFAM" id="SSF46565">
    <property type="entry name" value="Chaperone J-domain"/>
    <property type="match status" value="1"/>
</dbReference>
<dbReference type="PROSITE" id="PS00636">
    <property type="entry name" value="DNAJ_1"/>
    <property type="match status" value="1"/>
</dbReference>
<dbReference type="PROSITE" id="PS50076">
    <property type="entry name" value="DNAJ_2"/>
    <property type="match status" value="1"/>
</dbReference>
<protein>
    <recommendedName>
        <fullName>DnaJ-like protein 1</fullName>
    </recommendedName>
    <alternativeName>
        <fullName>Peroxisome assembly protein 22</fullName>
    </alternativeName>
</protein>
<organism>
    <name type="scientific">Saccharomyces cerevisiae (strain ATCC 204508 / S288c)</name>
    <name type="common">Baker's yeast</name>
    <dbReference type="NCBI Taxonomy" id="559292"/>
    <lineage>
        <taxon>Eukaryota</taxon>
        <taxon>Fungi</taxon>
        <taxon>Dikarya</taxon>
        <taxon>Ascomycota</taxon>
        <taxon>Saccharomycotina</taxon>
        <taxon>Saccharomycetes</taxon>
        <taxon>Saccharomycetales</taxon>
        <taxon>Saccharomycetaceae</taxon>
        <taxon>Saccharomyces</taxon>
    </lineage>
</organism>
<reference key="1">
    <citation type="journal article" date="1995" name="Yeast">
        <title>Nucleotide sequence and analysis of the centromeric region of yeast chromosome IX.</title>
        <authorList>
            <person name="Voss H."/>
            <person name="Tamames J."/>
            <person name="Teodoru C."/>
            <person name="Valencia A."/>
            <person name="Sensen C."/>
            <person name="Wiemann S."/>
            <person name="Schwager C."/>
            <person name="Zimmermann J."/>
            <person name="Sander C."/>
            <person name="Ansorge W."/>
        </authorList>
    </citation>
    <scope>NUCLEOTIDE SEQUENCE [GENOMIC DNA]</scope>
    <source>
        <strain>ATCC 204508 / S288c</strain>
    </source>
</reference>
<reference key="2">
    <citation type="journal article" date="1997" name="Nature">
        <title>The nucleotide sequence of Saccharomyces cerevisiae chromosome IX.</title>
        <authorList>
            <person name="Churcher C.M."/>
            <person name="Bowman S."/>
            <person name="Badcock K."/>
            <person name="Bankier A.T."/>
            <person name="Brown D."/>
            <person name="Chillingworth T."/>
            <person name="Connor R."/>
            <person name="Devlin K."/>
            <person name="Gentles S."/>
            <person name="Hamlin N."/>
            <person name="Harris D.E."/>
            <person name="Horsnell T."/>
            <person name="Hunt S."/>
            <person name="Jagels K."/>
            <person name="Jones M."/>
            <person name="Lye G."/>
            <person name="Moule S."/>
            <person name="Odell C."/>
            <person name="Pearson D."/>
            <person name="Rajandream M.A."/>
            <person name="Rice P."/>
            <person name="Rowley N."/>
            <person name="Skelton J."/>
            <person name="Smith V."/>
            <person name="Walsh S.V."/>
            <person name="Whitehead S."/>
            <person name="Barrell B.G."/>
        </authorList>
    </citation>
    <scope>NUCLEOTIDE SEQUENCE [LARGE SCALE GENOMIC DNA]</scope>
    <source>
        <strain>ATCC 204508 / S288c</strain>
    </source>
</reference>
<reference key="3">
    <citation type="journal article" date="2014" name="G3 (Bethesda)">
        <title>The reference genome sequence of Saccharomyces cerevisiae: Then and now.</title>
        <authorList>
            <person name="Engel S.R."/>
            <person name="Dietrich F.S."/>
            <person name="Fisk D.G."/>
            <person name="Binkley G."/>
            <person name="Balakrishnan R."/>
            <person name="Costanzo M.C."/>
            <person name="Dwight S.S."/>
            <person name="Hitz B.C."/>
            <person name="Karra K."/>
            <person name="Nash R.S."/>
            <person name="Weng S."/>
            <person name="Wong E.D."/>
            <person name="Lloyd P."/>
            <person name="Skrzypek M.S."/>
            <person name="Miyasato S.R."/>
            <person name="Simison M."/>
            <person name="Cherry J.M."/>
        </authorList>
    </citation>
    <scope>GENOME REANNOTATION</scope>
    <source>
        <strain>ATCC 204508 / S288c</strain>
    </source>
</reference>
<reference key="4">
    <citation type="journal article" date="2007" name="Genome Res.">
        <title>Approaching a complete repository of sequence-verified protein-encoding clones for Saccharomyces cerevisiae.</title>
        <authorList>
            <person name="Hu Y."/>
            <person name="Rolfs A."/>
            <person name="Bhullar B."/>
            <person name="Murthy T.V.S."/>
            <person name="Zhu C."/>
            <person name="Berger M.F."/>
            <person name="Camargo A.A."/>
            <person name="Kelley F."/>
            <person name="McCarron S."/>
            <person name="Jepson D."/>
            <person name="Richardson A."/>
            <person name="Raphael J."/>
            <person name="Moreira D."/>
            <person name="Taycher E."/>
            <person name="Zuo D."/>
            <person name="Mohr S."/>
            <person name="Kane M.F."/>
            <person name="Williamson J."/>
            <person name="Simpson A.J.G."/>
            <person name="Bulyk M.L."/>
            <person name="Harlow E."/>
            <person name="Marsischky G."/>
            <person name="Kolodner R.D."/>
            <person name="LaBaer J."/>
        </authorList>
    </citation>
    <scope>NUCLEOTIDE SEQUENCE [GENOMIC DNA]</scope>
    <source>
        <strain>ATCC 204508 / S288c</strain>
    </source>
</reference>
<reference key="5">
    <citation type="journal article" date="1993" name="Genetics">
        <title>An efficient positive selection procedure for the isolation of peroxisomal import and peroxisome assembly mutants of Saccharomyces cerevisiae.</title>
        <authorList>
            <person name="Elgersma Y."/>
            <person name="van den Berg M."/>
            <person name="Tabak H.F."/>
            <person name="Distel B."/>
        </authorList>
    </citation>
    <scope>FUNCTION</scope>
</reference>
<reference key="6">
    <citation type="journal article" date="1998" name="J. Cell Biol.">
        <title>The cytosolic DnaJ-like protein djp1p is involved specifically in peroxisomal protein import.</title>
        <authorList>
            <person name="Hettema E.H."/>
            <person name="Ruigrok C.C.M."/>
            <person name="Koerkamp M.G."/>
            <person name="van den Berg M."/>
            <person name="Tabak H.F."/>
            <person name="Distel B."/>
            <person name="Braakman I."/>
        </authorList>
    </citation>
    <scope>FUNCTION</scope>
    <scope>SUBCELLULAR LOCATION</scope>
</reference>
<reference key="7">
    <citation type="journal article" date="2003" name="Nature">
        <title>Global analysis of protein expression in yeast.</title>
        <authorList>
            <person name="Ghaemmaghami S."/>
            <person name="Huh W.-K."/>
            <person name="Bower K."/>
            <person name="Howson R.W."/>
            <person name="Belle A."/>
            <person name="Dephoure N."/>
            <person name="O'Shea E.K."/>
            <person name="Weissman J.S."/>
        </authorList>
    </citation>
    <scope>LEVEL OF PROTEIN EXPRESSION [LARGE SCALE ANALYSIS]</scope>
</reference>
<reference key="8">
    <citation type="journal article" date="2004" name="Eukaryot. Cell">
        <title>Role for the Ran binding protein, Mog1p, in Saccharomyces cerevisiae SLN1-SKN7 signal transduction.</title>
        <authorList>
            <person name="Lu J.M.-Y."/>
            <person name="Deschenes R.J."/>
            <person name="Fassler J.S."/>
        </authorList>
    </citation>
    <scope>INTERACTION WITH SLN1</scope>
</reference>
<proteinExistence type="evidence at protein level"/>
<evidence type="ECO:0000255" key="1">
    <source>
        <dbReference type="PROSITE-ProRule" id="PRU00286"/>
    </source>
</evidence>
<evidence type="ECO:0000256" key="2">
    <source>
        <dbReference type="SAM" id="MobiDB-lite"/>
    </source>
</evidence>
<evidence type="ECO:0000269" key="3">
    <source>
    </source>
</evidence>
<evidence type="ECO:0000269" key="4">
    <source>
    </source>
</evidence>
<evidence type="ECO:0000269" key="5">
    <source>
    </source>
</evidence>
<evidence type="ECO:0000269" key="6">
    <source>
    </source>
</evidence>
<evidence type="ECO:0000305" key="7"/>
<name>DJP1_YEAST</name>